<comment type="function">
    <text evidence="1">This is one of the proteins that bind and probably mediate the attachment of the 5S RNA into the large ribosomal subunit, where it forms part of the central protuberance.</text>
</comment>
<comment type="subunit">
    <text evidence="1">Part of the 50S ribosomal subunit; part of the 5S rRNA/L5/L18/L25 subcomplex. Contacts the 5S and 23S rRNAs.</text>
</comment>
<comment type="similarity">
    <text evidence="1">Belongs to the universal ribosomal protein uL18 family.</text>
</comment>
<name>RL18_BORDL</name>
<protein>
    <recommendedName>
        <fullName evidence="1">Large ribosomal subunit protein uL18</fullName>
    </recommendedName>
    <alternativeName>
        <fullName evidence="2">50S ribosomal protein L18</fullName>
    </alternativeName>
</protein>
<organism>
    <name type="scientific">Borrelia duttonii (strain Ly)</name>
    <dbReference type="NCBI Taxonomy" id="412419"/>
    <lineage>
        <taxon>Bacteria</taxon>
        <taxon>Pseudomonadati</taxon>
        <taxon>Spirochaetota</taxon>
        <taxon>Spirochaetia</taxon>
        <taxon>Spirochaetales</taxon>
        <taxon>Borreliaceae</taxon>
        <taxon>Borrelia</taxon>
    </lineage>
</organism>
<keyword id="KW-0687">Ribonucleoprotein</keyword>
<keyword id="KW-0689">Ribosomal protein</keyword>
<keyword id="KW-0694">RNA-binding</keyword>
<keyword id="KW-0699">rRNA-binding</keyword>
<gene>
    <name evidence="1" type="primary">rplR</name>
    <name type="ordered locus">BDU_497</name>
</gene>
<proteinExistence type="inferred from homology"/>
<feature type="chain" id="PRO_1000142624" description="Large ribosomal subunit protein uL18">
    <location>
        <begin position="1"/>
        <end position="119"/>
    </location>
</feature>
<accession>B5RM52</accession>
<reference key="1">
    <citation type="journal article" date="2008" name="PLoS Genet.">
        <title>The genome of Borrelia recurrentis, the agent of deadly louse-borne relapsing fever, is a degraded subset of tick-borne Borrelia duttonii.</title>
        <authorList>
            <person name="Lescot M."/>
            <person name="Audic S."/>
            <person name="Robert C."/>
            <person name="Nguyen T.T."/>
            <person name="Blanc G."/>
            <person name="Cutler S.J."/>
            <person name="Wincker P."/>
            <person name="Couloux A."/>
            <person name="Claverie J.-M."/>
            <person name="Raoult D."/>
            <person name="Drancourt M."/>
        </authorList>
    </citation>
    <scope>NUCLEOTIDE SEQUENCE [LARGE SCALE GENOMIC DNA]</scope>
    <source>
        <strain>Ly</strain>
    </source>
</reference>
<sequence>MKKVKEAEKRNIKRKKRIRDRIGFGVAERPRVTIFKSNKYFYAQVIDDIVGHTLASVSTIEKELSLNKNISDVKKLGEVLAKRLKDKNISKLIFDRNGYKYHGLIAGFATALREAGIDV</sequence>
<evidence type="ECO:0000255" key="1">
    <source>
        <dbReference type="HAMAP-Rule" id="MF_01337"/>
    </source>
</evidence>
<evidence type="ECO:0000305" key="2"/>
<dbReference type="EMBL" id="CP000976">
    <property type="protein sequence ID" value="ACH93438.1"/>
    <property type="molecule type" value="Genomic_DNA"/>
</dbReference>
<dbReference type="RefSeq" id="WP_012538248.1">
    <property type="nucleotide sequence ID" value="NC_011229.1"/>
</dbReference>
<dbReference type="SMR" id="B5RM52"/>
<dbReference type="STRING" id="412419.BDU_497"/>
<dbReference type="KEGG" id="bdu:BDU_497"/>
<dbReference type="eggNOG" id="COG0256">
    <property type="taxonomic scope" value="Bacteria"/>
</dbReference>
<dbReference type="HOGENOM" id="CLU_098841_0_1_12"/>
<dbReference type="OrthoDB" id="9810939at2"/>
<dbReference type="Proteomes" id="UP000000611">
    <property type="component" value="Chromosome"/>
</dbReference>
<dbReference type="GO" id="GO:0022625">
    <property type="term" value="C:cytosolic large ribosomal subunit"/>
    <property type="evidence" value="ECO:0007669"/>
    <property type="project" value="TreeGrafter"/>
</dbReference>
<dbReference type="GO" id="GO:0008097">
    <property type="term" value="F:5S rRNA binding"/>
    <property type="evidence" value="ECO:0007669"/>
    <property type="project" value="TreeGrafter"/>
</dbReference>
<dbReference type="GO" id="GO:0003735">
    <property type="term" value="F:structural constituent of ribosome"/>
    <property type="evidence" value="ECO:0007669"/>
    <property type="project" value="InterPro"/>
</dbReference>
<dbReference type="GO" id="GO:0006412">
    <property type="term" value="P:translation"/>
    <property type="evidence" value="ECO:0007669"/>
    <property type="project" value="UniProtKB-UniRule"/>
</dbReference>
<dbReference type="CDD" id="cd00432">
    <property type="entry name" value="Ribosomal_L18_L5e"/>
    <property type="match status" value="1"/>
</dbReference>
<dbReference type="Gene3D" id="3.30.420.100">
    <property type="match status" value="1"/>
</dbReference>
<dbReference type="HAMAP" id="MF_01337_B">
    <property type="entry name" value="Ribosomal_uL18_B"/>
    <property type="match status" value="1"/>
</dbReference>
<dbReference type="InterPro" id="IPR004389">
    <property type="entry name" value="Ribosomal_uL18_bac-type"/>
</dbReference>
<dbReference type="InterPro" id="IPR005484">
    <property type="entry name" value="Ribosomal_uL18_bac/euk"/>
</dbReference>
<dbReference type="NCBIfam" id="TIGR00060">
    <property type="entry name" value="L18_bact"/>
    <property type="match status" value="1"/>
</dbReference>
<dbReference type="PANTHER" id="PTHR12899">
    <property type="entry name" value="39S RIBOSOMAL PROTEIN L18, MITOCHONDRIAL"/>
    <property type="match status" value="1"/>
</dbReference>
<dbReference type="PANTHER" id="PTHR12899:SF3">
    <property type="entry name" value="LARGE RIBOSOMAL SUBUNIT PROTEIN UL18M"/>
    <property type="match status" value="1"/>
</dbReference>
<dbReference type="Pfam" id="PF00861">
    <property type="entry name" value="Ribosomal_L18p"/>
    <property type="match status" value="1"/>
</dbReference>
<dbReference type="SUPFAM" id="SSF53137">
    <property type="entry name" value="Translational machinery components"/>
    <property type="match status" value="1"/>
</dbReference>